<reference key="1">
    <citation type="journal article" date="1997" name="Nature">
        <title>The complete genome sequence of the hyperthermophilic, sulphate-reducing archaeon Archaeoglobus fulgidus.</title>
        <authorList>
            <person name="Klenk H.-P."/>
            <person name="Clayton R.A."/>
            <person name="Tomb J.-F."/>
            <person name="White O."/>
            <person name="Nelson K.E."/>
            <person name="Ketchum K.A."/>
            <person name="Dodson R.J."/>
            <person name="Gwinn M.L."/>
            <person name="Hickey E.K."/>
            <person name="Peterson J.D."/>
            <person name="Richardson D.L."/>
            <person name="Kerlavage A.R."/>
            <person name="Graham D.E."/>
            <person name="Kyrpides N.C."/>
            <person name="Fleischmann R.D."/>
            <person name="Quackenbush J."/>
            <person name="Lee N.H."/>
            <person name="Sutton G.G."/>
            <person name="Gill S.R."/>
            <person name="Kirkness E.F."/>
            <person name="Dougherty B.A."/>
            <person name="McKenney K."/>
            <person name="Adams M.D."/>
            <person name="Loftus B.J."/>
            <person name="Peterson S.N."/>
            <person name="Reich C.I."/>
            <person name="McNeil L.K."/>
            <person name="Badger J.H."/>
            <person name="Glodek A."/>
            <person name="Zhou L."/>
            <person name="Overbeek R."/>
            <person name="Gocayne J.D."/>
            <person name="Weidman J.F."/>
            <person name="McDonald L.A."/>
            <person name="Utterback T.R."/>
            <person name="Cotton M.D."/>
            <person name="Spriggs T."/>
            <person name="Artiach P."/>
            <person name="Kaine B.P."/>
            <person name="Sykes S.M."/>
            <person name="Sadow P.W."/>
            <person name="D'Andrea K.P."/>
            <person name="Bowman C."/>
            <person name="Fujii C."/>
            <person name="Garland S.A."/>
            <person name="Mason T.M."/>
            <person name="Olsen G.J."/>
            <person name="Fraser C.M."/>
            <person name="Smith H.O."/>
            <person name="Woese C.R."/>
            <person name="Venter J.C."/>
        </authorList>
    </citation>
    <scope>NUCLEOTIDE SEQUENCE [LARGE SCALE GENOMIC DNA]</scope>
    <source>
        <strain>ATCC 49558 / DSM 4304 / JCM 9628 / NBRC 100126 / VC-16</strain>
    </source>
</reference>
<feature type="chain" id="PRO_0000128149" description="Uncharacterized protein AF_2391">
    <location>
        <begin position="1"/>
        <end position="66"/>
    </location>
</feature>
<feature type="region of interest" description="Disordered" evidence="1">
    <location>
        <begin position="1"/>
        <end position="21"/>
    </location>
</feature>
<accession>O30280</accession>
<dbReference type="EMBL" id="AE000782">
    <property type="protein sequence ID" value="AAB91281.1"/>
    <property type="molecule type" value="Genomic_DNA"/>
</dbReference>
<dbReference type="PIR" id="H69548">
    <property type="entry name" value="H69548"/>
</dbReference>
<dbReference type="RefSeq" id="WP_010879878.1">
    <property type="nucleotide sequence ID" value="NC_000917.1"/>
</dbReference>
<dbReference type="STRING" id="224325.AF_2391"/>
<dbReference type="PaxDb" id="224325-AF_2391"/>
<dbReference type="EnsemblBacteria" id="AAB91281">
    <property type="protein sequence ID" value="AAB91281"/>
    <property type="gene ID" value="AF_2391"/>
</dbReference>
<dbReference type="GeneID" id="80263358"/>
<dbReference type="KEGG" id="afu:AF_2391"/>
<dbReference type="eggNOG" id="arCOG05144">
    <property type="taxonomic scope" value="Archaea"/>
</dbReference>
<dbReference type="HOGENOM" id="CLU_2820566_0_0_2"/>
<dbReference type="OrthoDB" id="142921at2157"/>
<dbReference type="Proteomes" id="UP000002199">
    <property type="component" value="Chromosome"/>
</dbReference>
<dbReference type="InterPro" id="IPR035205">
    <property type="entry name" value="DUF5320"/>
</dbReference>
<dbReference type="Pfam" id="PF17253">
    <property type="entry name" value="DUF5320"/>
    <property type="match status" value="1"/>
</dbReference>
<evidence type="ECO:0000256" key="1">
    <source>
        <dbReference type="SAM" id="MobiDB-lite"/>
    </source>
</evidence>
<sequence>MPGGDRTGPWGQGPRTGRRAGFCSGYRMPGFMNRSVWPPFGGRWFRWFGRRFWGRRAGRAGRGRWW</sequence>
<proteinExistence type="predicted"/>
<organism>
    <name type="scientific">Archaeoglobus fulgidus (strain ATCC 49558 / DSM 4304 / JCM 9628 / NBRC 100126 / VC-16)</name>
    <dbReference type="NCBI Taxonomy" id="224325"/>
    <lineage>
        <taxon>Archaea</taxon>
        <taxon>Methanobacteriati</taxon>
        <taxon>Methanobacteriota</taxon>
        <taxon>Archaeoglobi</taxon>
        <taxon>Archaeoglobales</taxon>
        <taxon>Archaeoglobaceae</taxon>
        <taxon>Archaeoglobus</taxon>
    </lineage>
</organism>
<protein>
    <recommendedName>
        <fullName>Uncharacterized protein AF_2391</fullName>
    </recommendedName>
</protein>
<keyword id="KW-1185">Reference proteome</keyword>
<name>Y2391_ARCFU</name>
<gene>
    <name type="ordered locus">AF_2391</name>
</gene>